<keyword id="KW-0963">Cytoplasm</keyword>
<keyword id="KW-0489">Methyltransferase</keyword>
<keyword id="KW-1185">Reference proteome</keyword>
<keyword id="KW-0698">rRNA processing</keyword>
<keyword id="KW-0949">S-adenosyl-L-methionine</keyword>
<keyword id="KW-0808">Transferase</keyword>
<evidence type="ECO:0000255" key="1">
    <source>
        <dbReference type="HAMAP-Rule" id="MF_01007"/>
    </source>
</evidence>
<accession>C6GW75</accession>
<organism>
    <name type="scientific">Streptococcus suis (strain BM407)</name>
    <dbReference type="NCBI Taxonomy" id="568814"/>
    <lineage>
        <taxon>Bacteria</taxon>
        <taxon>Bacillati</taxon>
        <taxon>Bacillota</taxon>
        <taxon>Bacilli</taxon>
        <taxon>Lactobacillales</taxon>
        <taxon>Streptococcaceae</taxon>
        <taxon>Streptococcus</taxon>
    </lineage>
</organism>
<comment type="function">
    <text evidence="1">Specifically methylates the N4 position of cytidine in position 1402 (C1402) of 16S rRNA.</text>
</comment>
<comment type="catalytic activity">
    <reaction evidence="1">
        <text>cytidine(1402) in 16S rRNA + S-adenosyl-L-methionine = N(4)-methylcytidine(1402) in 16S rRNA + S-adenosyl-L-homocysteine + H(+)</text>
        <dbReference type="Rhea" id="RHEA:42928"/>
        <dbReference type="Rhea" id="RHEA-COMP:10286"/>
        <dbReference type="Rhea" id="RHEA-COMP:10287"/>
        <dbReference type="ChEBI" id="CHEBI:15378"/>
        <dbReference type="ChEBI" id="CHEBI:57856"/>
        <dbReference type="ChEBI" id="CHEBI:59789"/>
        <dbReference type="ChEBI" id="CHEBI:74506"/>
        <dbReference type="ChEBI" id="CHEBI:82748"/>
        <dbReference type="EC" id="2.1.1.199"/>
    </reaction>
</comment>
<comment type="subcellular location">
    <subcellularLocation>
        <location evidence="1">Cytoplasm</location>
    </subcellularLocation>
</comment>
<comment type="similarity">
    <text evidence="1">Belongs to the methyltransferase superfamily. RsmH family.</text>
</comment>
<gene>
    <name evidence="1" type="primary">rsmH</name>
    <name type="synonym">mraW</name>
    <name type="ordered locus">SSUBM407_1624</name>
</gene>
<protein>
    <recommendedName>
        <fullName evidence="1">Ribosomal RNA small subunit methyltransferase H</fullName>
        <ecNumber evidence="1">2.1.1.199</ecNumber>
    </recommendedName>
    <alternativeName>
        <fullName evidence="1">16S rRNA m(4)C1402 methyltransferase</fullName>
    </alternativeName>
    <alternativeName>
        <fullName evidence="1">rRNA (cytosine-N(4)-)-methyltransferase RsmH</fullName>
    </alternativeName>
</protein>
<name>RSMH_STRS4</name>
<feature type="chain" id="PRO_0000387167" description="Ribosomal RNA small subunit methyltransferase H">
    <location>
        <begin position="1"/>
        <end position="316"/>
    </location>
</feature>
<feature type="binding site" evidence="1">
    <location>
        <begin position="35"/>
        <end position="37"/>
    </location>
    <ligand>
        <name>S-adenosyl-L-methionine</name>
        <dbReference type="ChEBI" id="CHEBI:59789"/>
    </ligand>
</feature>
<feature type="binding site" evidence="1">
    <location>
        <position position="55"/>
    </location>
    <ligand>
        <name>S-adenosyl-L-methionine</name>
        <dbReference type="ChEBI" id="CHEBI:59789"/>
    </ligand>
</feature>
<feature type="binding site" evidence="1">
    <location>
        <position position="84"/>
    </location>
    <ligand>
        <name>S-adenosyl-L-methionine</name>
        <dbReference type="ChEBI" id="CHEBI:59789"/>
    </ligand>
</feature>
<feature type="binding site" evidence="1">
    <location>
        <position position="105"/>
    </location>
    <ligand>
        <name>S-adenosyl-L-methionine</name>
        <dbReference type="ChEBI" id="CHEBI:59789"/>
    </ligand>
</feature>
<feature type="binding site" evidence="1">
    <location>
        <position position="112"/>
    </location>
    <ligand>
        <name>S-adenosyl-L-methionine</name>
        <dbReference type="ChEBI" id="CHEBI:59789"/>
    </ligand>
</feature>
<sequence length="316" mass="35731">MTKEFNHTTVLLHETVDMLDIKPNGIYVDATLGGAGHSEYLLSQLTDGGHLYAFDQDQTAIDHAHIRLASYIEKGQVTFIRDNFRNLKTRLAELGVTEIDGICYDLGVSSPQLDERERGFSYKQDAPLDMRMNREGHLTAYDVVNNYDYHDLVRIFFKYGEDKFSKQIARKIEQARAVKPIETTTELAELIKSAKPAKELKKKGHPAKQIFQAIRIEVNDELGAADESIQQAIDLLALDGRISVITFHSLEDRLTKQLFKEASTIDVPKGLPFIPDDLKAPLELVNRKPILPSQEELEANNRAHSAKLRVAKKVHK</sequence>
<reference key="1">
    <citation type="journal article" date="2009" name="PLoS ONE">
        <title>Rapid evolution of virulence and drug resistance in the emerging zoonotic pathogen Streptococcus suis.</title>
        <authorList>
            <person name="Holden M.T.G."/>
            <person name="Hauser H."/>
            <person name="Sanders M."/>
            <person name="Ngo T.H."/>
            <person name="Cherevach I."/>
            <person name="Cronin A."/>
            <person name="Goodhead I."/>
            <person name="Mungall K."/>
            <person name="Quail M.A."/>
            <person name="Price C."/>
            <person name="Rabbinowitsch E."/>
            <person name="Sharp S."/>
            <person name="Croucher N.J."/>
            <person name="Chieu T.B."/>
            <person name="Mai N.T.H."/>
            <person name="Diep T.S."/>
            <person name="Chinh N.T."/>
            <person name="Kehoe M."/>
            <person name="Leigh J.A."/>
            <person name="Ward P.N."/>
            <person name="Dowson C.G."/>
            <person name="Whatmore A.M."/>
            <person name="Chanter N."/>
            <person name="Iversen P."/>
            <person name="Gottschalk M."/>
            <person name="Slater J.D."/>
            <person name="Smith H.E."/>
            <person name="Spratt B.G."/>
            <person name="Xu J."/>
            <person name="Ye C."/>
            <person name="Bentley S."/>
            <person name="Barrell B.G."/>
            <person name="Schultsz C."/>
            <person name="Maskell D.J."/>
            <person name="Parkhill J."/>
        </authorList>
    </citation>
    <scope>NUCLEOTIDE SEQUENCE [LARGE SCALE GENOMIC DNA]</scope>
    <source>
        <strain>BM407</strain>
    </source>
</reference>
<dbReference type="EC" id="2.1.1.199" evidence="1"/>
<dbReference type="EMBL" id="FM252032">
    <property type="protein sequence ID" value="CAZ56480.1"/>
    <property type="molecule type" value="Genomic_DNA"/>
</dbReference>
<dbReference type="RefSeq" id="WP_002937995.1">
    <property type="nucleotide sequence ID" value="NC_012926.1"/>
</dbReference>
<dbReference type="RefSeq" id="YP_003029321.1">
    <property type="nucleotide sequence ID" value="NC_012926.1"/>
</dbReference>
<dbReference type="SMR" id="C6GW75"/>
<dbReference type="GeneID" id="8153161"/>
<dbReference type="KEGG" id="ssb:SSUBM407_1624"/>
<dbReference type="PATRIC" id="fig|568814.3.peg.1661"/>
<dbReference type="HOGENOM" id="CLU_038422_2_0_9"/>
<dbReference type="Proteomes" id="UP000009077">
    <property type="component" value="Chromosome"/>
</dbReference>
<dbReference type="GO" id="GO:0005737">
    <property type="term" value="C:cytoplasm"/>
    <property type="evidence" value="ECO:0007669"/>
    <property type="project" value="UniProtKB-SubCell"/>
</dbReference>
<dbReference type="GO" id="GO:0071424">
    <property type="term" value="F:rRNA (cytosine-N4-)-methyltransferase activity"/>
    <property type="evidence" value="ECO:0007669"/>
    <property type="project" value="UniProtKB-UniRule"/>
</dbReference>
<dbReference type="GO" id="GO:0070475">
    <property type="term" value="P:rRNA base methylation"/>
    <property type="evidence" value="ECO:0007669"/>
    <property type="project" value="UniProtKB-UniRule"/>
</dbReference>
<dbReference type="FunFam" id="1.10.150.170:FF:000001">
    <property type="entry name" value="Ribosomal RNA small subunit methyltransferase H"/>
    <property type="match status" value="1"/>
</dbReference>
<dbReference type="Gene3D" id="1.10.150.170">
    <property type="entry name" value="Putative methyltransferase TM0872, insert domain"/>
    <property type="match status" value="1"/>
</dbReference>
<dbReference type="Gene3D" id="3.40.50.150">
    <property type="entry name" value="Vaccinia Virus protein VP39"/>
    <property type="match status" value="1"/>
</dbReference>
<dbReference type="HAMAP" id="MF_01007">
    <property type="entry name" value="16SrRNA_methyltr_H"/>
    <property type="match status" value="1"/>
</dbReference>
<dbReference type="InterPro" id="IPR002903">
    <property type="entry name" value="RsmH"/>
</dbReference>
<dbReference type="InterPro" id="IPR023397">
    <property type="entry name" value="SAM-dep_MeTrfase_MraW_recog"/>
</dbReference>
<dbReference type="InterPro" id="IPR029063">
    <property type="entry name" value="SAM-dependent_MTases_sf"/>
</dbReference>
<dbReference type="NCBIfam" id="TIGR00006">
    <property type="entry name" value="16S rRNA (cytosine(1402)-N(4))-methyltransferase RsmH"/>
    <property type="match status" value="1"/>
</dbReference>
<dbReference type="PANTHER" id="PTHR11265:SF0">
    <property type="entry name" value="12S RRNA N4-METHYLCYTIDINE METHYLTRANSFERASE"/>
    <property type="match status" value="1"/>
</dbReference>
<dbReference type="PANTHER" id="PTHR11265">
    <property type="entry name" value="S-ADENOSYL-METHYLTRANSFERASE MRAW"/>
    <property type="match status" value="1"/>
</dbReference>
<dbReference type="Pfam" id="PF01795">
    <property type="entry name" value="Methyltransf_5"/>
    <property type="match status" value="1"/>
</dbReference>
<dbReference type="PIRSF" id="PIRSF004486">
    <property type="entry name" value="MraW"/>
    <property type="match status" value="1"/>
</dbReference>
<dbReference type="SUPFAM" id="SSF81799">
    <property type="entry name" value="Putative methyltransferase TM0872, insert domain"/>
    <property type="match status" value="1"/>
</dbReference>
<dbReference type="SUPFAM" id="SSF53335">
    <property type="entry name" value="S-adenosyl-L-methionine-dependent methyltransferases"/>
    <property type="match status" value="1"/>
</dbReference>
<proteinExistence type="inferred from homology"/>